<gene>
    <name type="ordered locus">Msed_0394</name>
</gene>
<accession>A4YDR9</accession>
<keyword id="KW-0067">ATP-binding</keyword>
<keyword id="KW-0276">Fatty acid metabolism</keyword>
<keyword id="KW-0436">Ligase</keyword>
<keyword id="KW-0443">Lipid metabolism</keyword>
<keyword id="KW-0460">Magnesium</keyword>
<keyword id="KW-0547">Nucleotide-binding</keyword>
<keyword id="KW-1185">Reference proteome</keyword>
<reference key="1">
    <citation type="journal article" date="2008" name="Appl. Environ. Microbiol.">
        <title>The genome sequence of the metal-mobilizing, extremely thermoacidophilic archaeon Metallosphaera sedula provides insights into bioleaching-associated metabolism.</title>
        <authorList>
            <person name="Auernik K.S."/>
            <person name="Maezato Y."/>
            <person name="Blum P.H."/>
            <person name="Kelly R.M."/>
        </authorList>
    </citation>
    <scope>NUCLEOTIDE SEQUENCE [LARGE SCALE GENOMIC DNA]</scope>
    <source>
        <strain>ATCC 51363 / DSM 5348 / JCM 9185 / NBRC 15509 / TH2</strain>
    </source>
</reference>
<reference key="2">
    <citation type="journal article" date="2013" name="J. Biol. Chem.">
        <title>Role of 4-hydroxybutyrate-CoA synthetase in the CO2 fixation cycle in thermoacidophilic archaea.</title>
        <authorList>
            <person name="Hawkins A.S."/>
            <person name="Han Y."/>
            <person name="Bennett R.K."/>
            <person name="Adams M.W."/>
            <person name="Kelly R.M."/>
        </authorList>
    </citation>
    <scope>FUNCTION</scope>
    <scope>CATALYTIC ACTIVITY</scope>
    <scope>BIOPHYSICOCHEMICAL PROPERTIES</scope>
    <scope>SUBSTRATE SPECIFICITY</scope>
    <source>
        <strain>ATCC 51363 / DSM 5348 / JCM 9185 / NBRC 15509 / TH2</strain>
    </source>
</reference>
<organism>
    <name type="scientific">Metallosphaera sedula (strain ATCC 51363 / DSM 5348 / JCM 9185 / NBRC 15509 / TH2)</name>
    <dbReference type="NCBI Taxonomy" id="399549"/>
    <lineage>
        <taxon>Archaea</taxon>
        <taxon>Thermoproteota</taxon>
        <taxon>Thermoprotei</taxon>
        <taxon>Sulfolobales</taxon>
        <taxon>Sulfolobaceae</taxon>
        <taxon>Metallosphaera</taxon>
    </lineage>
</organism>
<evidence type="ECO:0000250" key="1">
    <source>
        <dbReference type="UniProtKB" id="Q08AH3"/>
    </source>
</evidence>
<evidence type="ECO:0000269" key="2">
    <source>
    </source>
</evidence>
<evidence type="ECO:0000303" key="3">
    <source>
    </source>
</evidence>
<evidence type="ECO:0000305" key="4"/>
<evidence type="ECO:0000305" key="5">
    <source>
    </source>
</evidence>
<name>HBCL2_METS5</name>
<protein>
    <recommendedName>
        <fullName evidence="3">4-hydroxybutyrate--CoA ligase 2</fullName>
        <ecNumber evidence="2">6.2.1.40</ecNumber>
    </recommendedName>
    <alternativeName>
        <fullName evidence="5">Acetate--CoA ligase</fullName>
        <ecNumber evidence="2">6.2.1.1</ecNumber>
    </alternativeName>
    <alternativeName>
        <fullName evidence="5">Butyrate--CoA ligase</fullName>
        <ecNumber evidence="2">6.2.1.2</ecNumber>
    </alternativeName>
    <alternativeName>
        <fullName evidence="5">Propionate--CoA ligase</fullName>
        <ecNumber evidence="2">6.2.1.17</ecNumber>
    </alternativeName>
    <alternativeName>
        <fullName>acyl-activating enzyme</fullName>
    </alternativeName>
</protein>
<feature type="chain" id="PRO_0000435709" description="4-hydroxybutyrate--CoA ligase 2">
    <location>
        <begin position="1"/>
        <end position="549"/>
    </location>
</feature>
<feature type="binding site" evidence="1">
    <location>
        <begin position="195"/>
        <end position="203"/>
    </location>
    <ligand>
        <name>ATP</name>
        <dbReference type="ChEBI" id="CHEBI:30616"/>
    </ligand>
</feature>
<feature type="binding site" evidence="1">
    <location>
        <begin position="336"/>
        <end position="341"/>
    </location>
    <ligand>
        <name>ATP</name>
        <dbReference type="ChEBI" id="CHEBI:30616"/>
    </ligand>
</feature>
<feature type="binding site" evidence="1">
    <location>
        <position position="425"/>
    </location>
    <ligand>
        <name>ATP</name>
        <dbReference type="ChEBI" id="CHEBI:30616"/>
    </ligand>
</feature>
<feature type="binding site" evidence="1">
    <location>
        <position position="440"/>
    </location>
    <ligand>
        <name>ATP</name>
        <dbReference type="ChEBI" id="CHEBI:30616"/>
    </ligand>
</feature>
<feature type="binding site" evidence="1">
    <location>
        <begin position="448"/>
        <end position="450"/>
    </location>
    <ligand>
        <name>CoA</name>
        <dbReference type="ChEBI" id="CHEBI:57287"/>
    </ligand>
</feature>
<feature type="binding site" evidence="1">
    <location>
        <position position="506"/>
    </location>
    <ligand>
        <name>CoA</name>
        <dbReference type="ChEBI" id="CHEBI:57287"/>
    </ligand>
</feature>
<feature type="binding site" evidence="1">
    <location>
        <begin position="514"/>
        <end position="516"/>
    </location>
    <ligand>
        <name>CoA</name>
        <dbReference type="ChEBI" id="CHEBI:57287"/>
    </ligand>
</feature>
<feature type="binding site" evidence="1">
    <location>
        <position position="530"/>
    </location>
    <ligand>
        <name>ATP</name>
        <dbReference type="ChEBI" id="CHEBI:30616"/>
    </ligand>
</feature>
<comment type="function">
    <text evidence="2">Catalyzes the ligation of coenzyme A (CoA) to 4-hydroxybutyrate (4HB). It can also use butyrate, valerate, propionate, acetate and 3-hydroxybutyrate (3HB) as substrates.</text>
</comment>
<comment type="catalytic activity">
    <reaction evidence="2">
        <text>4-hydroxybutanoate + ATP + CoA = 4-hydroxybutanoyl-CoA + AMP + diphosphate</text>
        <dbReference type="Rhea" id="RHEA:23128"/>
        <dbReference type="ChEBI" id="CHEBI:16724"/>
        <dbReference type="ChEBI" id="CHEBI:30616"/>
        <dbReference type="ChEBI" id="CHEBI:33019"/>
        <dbReference type="ChEBI" id="CHEBI:57287"/>
        <dbReference type="ChEBI" id="CHEBI:58574"/>
        <dbReference type="ChEBI" id="CHEBI:456215"/>
        <dbReference type="EC" id="6.2.1.40"/>
    </reaction>
</comment>
<comment type="catalytic activity">
    <reaction evidence="2">
        <text>acetate + ATP + CoA = acetyl-CoA + AMP + diphosphate</text>
        <dbReference type="Rhea" id="RHEA:23176"/>
        <dbReference type="ChEBI" id="CHEBI:30089"/>
        <dbReference type="ChEBI" id="CHEBI:30616"/>
        <dbReference type="ChEBI" id="CHEBI:33019"/>
        <dbReference type="ChEBI" id="CHEBI:57287"/>
        <dbReference type="ChEBI" id="CHEBI:57288"/>
        <dbReference type="ChEBI" id="CHEBI:456215"/>
        <dbReference type="EC" id="6.2.1.1"/>
    </reaction>
</comment>
<comment type="catalytic activity">
    <reaction evidence="2">
        <text>propanoate + ATP + CoA = propanoyl-CoA + AMP + diphosphate</text>
        <dbReference type="Rhea" id="RHEA:20373"/>
        <dbReference type="ChEBI" id="CHEBI:17272"/>
        <dbReference type="ChEBI" id="CHEBI:30616"/>
        <dbReference type="ChEBI" id="CHEBI:33019"/>
        <dbReference type="ChEBI" id="CHEBI:57287"/>
        <dbReference type="ChEBI" id="CHEBI:57392"/>
        <dbReference type="ChEBI" id="CHEBI:456215"/>
        <dbReference type="EC" id="6.2.1.17"/>
    </reaction>
</comment>
<comment type="catalytic activity">
    <reaction evidence="2">
        <text>a medium-chain fatty acid + ATP + CoA = a medium-chain fatty acyl-CoA + AMP + diphosphate</text>
        <dbReference type="Rhea" id="RHEA:48340"/>
        <dbReference type="ChEBI" id="CHEBI:30616"/>
        <dbReference type="ChEBI" id="CHEBI:33019"/>
        <dbReference type="ChEBI" id="CHEBI:57287"/>
        <dbReference type="ChEBI" id="CHEBI:59558"/>
        <dbReference type="ChEBI" id="CHEBI:90546"/>
        <dbReference type="ChEBI" id="CHEBI:456215"/>
        <dbReference type="EC" id="6.2.1.2"/>
    </reaction>
</comment>
<comment type="cofactor">
    <cofactor evidence="1">
        <name>Mg(2+)</name>
        <dbReference type="ChEBI" id="CHEBI:18420"/>
    </cofactor>
    <cofactor evidence="1">
        <name>Mn(2+)</name>
        <dbReference type="ChEBI" id="CHEBI:29035"/>
    </cofactor>
</comment>
<comment type="biophysicochemical properties">
    <kinetics>
        <KM evidence="2">60 uM for butyrate</KM>
        <KM evidence="2">120 uM for valerate</KM>
        <KM evidence="2">540 uM for propionate</KM>
        <KM evidence="2">680 uM for acetate</KM>
        <KM evidence="2">1540 uM for 4HB</KM>
        <KM evidence="2">1880 uM for 3HB</KM>
        <Vmax evidence="2">0.22 umol/min/mg enzyme with 4HB as substrate</Vmax>
        <Vmax evidence="2">0.21 umol/min/mg enzyme with butyrate as substrate</Vmax>
        <Vmax evidence="2">0.2 umol/min/mg enzyme with valerate as substrate</Vmax>
        <Vmax evidence="2">0.2 umol/min/mg enzyme with propionate as substrate</Vmax>
        <Vmax evidence="2">0.13 umol/min/mg enzyme with acetate as substrate</Vmax>
        <Vmax evidence="2">0.07 umol/min/mg enzyme with 3HB as substrate</Vmax>
        <text evidence="2">kcat is 0.24 sec(-1) for ligase activity with 4HB as substrate. kcat is 0.23 sec(-1) for ligase activity with butyrate as substrate. kcat is 0.22 sec(-1) for ligase activity with valerate as substrate. kcat is 0.21 sec(-1) for ligase activity with propionate as substrate. kcat is 0.14 sec(-1) for ligase activity with acetate as substrate. kcat is 0.08 sec(-1) for ligase activity with 3HB as substrate.</text>
    </kinetics>
</comment>
<comment type="similarity">
    <text evidence="4">Belongs to the ATP-dependent AMP-binding enzyme family.</text>
</comment>
<dbReference type="EC" id="6.2.1.40" evidence="2"/>
<dbReference type="EC" id="6.2.1.1" evidence="2"/>
<dbReference type="EC" id="6.2.1.2" evidence="2"/>
<dbReference type="EC" id="6.2.1.17" evidence="2"/>
<dbReference type="EMBL" id="CP000682">
    <property type="protein sequence ID" value="ABP94571.1"/>
    <property type="molecule type" value="Genomic_DNA"/>
</dbReference>
<dbReference type="RefSeq" id="WP_012020359.1">
    <property type="nucleotide sequence ID" value="NC_009440.1"/>
</dbReference>
<dbReference type="SMR" id="A4YDR9"/>
<dbReference type="STRING" id="399549.Msed_0394"/>
<dbReference type="GeneID" id="91754841"/>
<dbReference type="KEGG" id="mse:Msed_0394"/>
<dbReference type="eggNOG" id="arCOG00856">
    <property type="taxonomic scope" value="Archaea"/>
</dbReference>
<dbReference type="HOGENOM" id="CLU_000022_59_5_2"/>
<dbReference type="BRENDA" id="6.2.1.40">
    <property type="organism ID" value="7245"/>
</dbReference>
<dbReference type="Proteomes" id="UP000000242">
    <property type="component" value="Chromosome"/>
</dbReference>
<dbReference type="GO" id="GO:0003987">
    <property type="term" value="F:acetate-CoA ligase activity"/>
    <property type="evidence" value="ECO:0000314"/>
    <property type="project" value="UniProtKB"/>
</dbReference>
<dbReference type="GO" id="GO:0005524">
    <property type="term" value="F:ATP binding"/>
    <property type="evidence" value="ECO:0007669"/>
    <property type="project" value="UniProtKB-KW"/>
</dbReference>
<dbReference type="GO" id="GO:0031956">
    <property type="term" value="F:medium-chain fatty acid-CoA ligase activity"/>
    <property type="evidence" value="ECO:0000314"/>
    <property type="project" value="UniProtKB"/>
</dbReference>
<dbReference type="GO" id="GO:0050218">
    <property type="term" value="F:propionate-CoA ligase activity"/>
    <property type="evidence" value="ECO:0000314"/>
    <property type="project" value="UniProtKB"/>
</dbReference>
<dbReference type="GO" id="GO:0006631">
    <property type="term" value="P:fatty acid metabolic process"/>
    <property type="evidence" value="ECO:0007669"/>
    <property type="project" value="UniProtKB-KW"/>
</dbReference>
<dbReference type="CDD" id="cd12118">
    <property type="entry name" value="ttLC_FACS_AEE21_like"/>
    <property type="match status" value="1"/>
</dbReference>
<dbReference type="FunFam" id="3.40.50.12780:FF:000003">
    <property type="entry name" value="Long-chain-fatty-acid--CoA ligase FadD"/>
    <property type="match status" value="1"/>
</dbReference>
<dbReference type="Gene3D" id="3.30.300.30">
    <property type="match status" value="1"/>
</dbReference>
<dbReference type="Gene3D" id="3.40.50.12780">
    <property type="entry name" value="N-terminal domain of ligase-like"/>
    <property type="match status" value="1"/>
</dbReference>
<dbReference type="InterPro" id="IPR025110">
    <property type="entry name" value="AMP-bd_C"/>
</dbReference>
<dbReference type="InterPro" id="IPR045851">
    <property type="entry name" value="AMP-bd_C_sf"/>
</dbReference>
<dbReference type="InterPro" id="IPR020845">
    <property type="entry name" value="AMP-binding_CS"/>
</dbReference>
<dbReference type="InterPro" id="IPR000873">
    <property type="entry name" value="AMP-dep_synth/lig_dom"/>
</dbReference>
<dbReference type="InterPro" id="IPR042099">
    <property type="entry name" value="ANL_N_sf"/>
</dbReference>
<dbReference type="PANTHER" id="PTHR43859">
    <property type="entry name" value="ACYL-ACTIVATING ENZYME"/>
    <property type="match status" value="1"/>
</dbReference>
<dbReference type="PANTHER" id="PTHR43859:SF4">
    <property type="entry name" value="BUTANOATE--COA LIGASE AAE1-RELATED"/>
    <property type="match status" value="1"/>
</dbReference>
<dbReference type="Pfam" id="PF00501">
    <property type="entry name" value="AMP-binding"/>
    <property type="match status" value="1"/>
</dbReference>
<dbReference type="Pfam" id="PF13193">
    <property type="entry name" value="AMP-binding_C"/>
    <property type="match status" value="1"/>
</dbReference>
<dbReference type="SUPFAM" id="SSF56801">
    <property type="entry name" value="Acetyl-CoA synthetase-like"/>
    <property type="match status" value="1"/>
</dbReference>
<dbReference type="PROSITE" id="PS00455">
    <property type="entry name" value="AMP_BINDING"/>
    <property type="match status" value="1"/>
</dbReference>
<sequence>MGGFKIPNYEGVDPTGSWYSVLTPLLFLERAGKYFKDKTAVVYRDSRYTYSTFYDNVMVQASALMRRGFSREDKLSFISRNRPEFLESFFGVPYAGGVLVPINFRLSPKEMAYIINHSDSKFVVVDEPYLNSLLEVKDQIKAEIILLEDPDNPSASETARKEVRMTYRELVKGGSRDPLPIPAKEEYSMITLYYTSGTTGLPKGVMHHHRGAFLNAMAEVLEHQMDLNSVYLWTLPMFHAASWGFSWATVAVGATNVCLDKVDYPLIYRLVEKERVTHMCAAPTVYVNLADYMKRNNLKFSNRVHMLVAGAAPAPATLKAMQEIGGYMCHVYGLTETYGPHSICEWRREWDSLPLEEQAKLKARQGIPYVSFEMDVFDANGKPVPWDGKTIGEVVMRGHNVALGYYKNPEKTAESFRDGWFHSGDAAVVHPDGYIEIVDRFKDLINTGGEKVSSILVEKTLMEIPGVKAVAVYGTPDEKWGEVVTARIELQEGVKLTEEEVIKFCKERLAHFECPKIVEFGPIPMTATGKMQKYVLRNEAKAKANKEKS</sequence>
<proteinExistence type="evidence at protein level"/>